<organism>
    <name type="scientific">Bordetella petrii (strain ATCC BAA-461 / DSM 12804 / CCUG 43448)</name>
    <dbReference type="NCBI Taxonomy" id="340100"/>
    <lineage>
        <taxon>Bacteria</taxon>
        <taxon>Pseudomonadati</taxon>
        <taxon>Pseudomonadota</taxon>
        <taxon>Betaproteobacteria</taxon>
        <taxon>Burkholderiales</taxon>
        <taxon>Alcaligenaceae</taxon>
        <taxon>Bordetella</taxon>
    </lineage>
</organism>
<accession>A9IIC5</accession>
<name>PNCB_BORPD</name>
<reference key="1">
    <citation type="journal article" date="2008" name="BMC Genomics">
        <title>The missing link: Bordetella petrii is endowed with both the metabolic versatility of environmental bacteria and virulence traits of pathogenic Bordetellae.</title>
        <authorList>
            <person name="Gross R."/>
            <person name="Guzman C.A."/>
            <person name="Sebaihia M."/>
            <person name="Martin dos Santos V.A.P."/>
            <person name="Pieper D.H."/>
            <person name="Koebnik R."/>
            <person name="Lechner M."/>
            <person name="Bartels D."/>
            <person name="Buhrmester J."/>
            <person name="Choudhuri J.V."/>
            <person name="Ebensen T."/>
            <person name="Gaigalat L."/>
            <person name="Herrmann S."/>
            <person name="Khachane A.N."/>
            <person name="Larisch C."/>
            <person name="Link S."/>
            <person name="Linke B."/>
            <person name="Meyer F."/>
            <person name="Mormann S."/>
            <person name="Nakunst D."/>
            <person name="Rueckert C."/>
            <person name="Schneiker-Bekel S."/>
            <person name="Schulze K."/>
            <person name="Voerholter F.-J."/>
            <person name="Yevsa T."/>
            <person name="Engle J.T."/>
            <person name="Goldman W.E."/>
            <person name="Puehler A."/>
            <person name="Goebel U.B."/>
            <person name="Goesmann A."/>
            <person name="Bloecker H."/>
            <person name="Kaiser O."/>
            <person name="Martinez-Arias R."/>
        </authorList>
    </citation>
    <scope>NUCLEOTIDE SEQUENCE [LARGE SCALE GENOMIC DNA]</scope>
    <source>
        <strain>ATCC BAA-461 / DSM 12804 / CCUG 43448</strain>
    </source>
</reference>
<keyword id="KW-0436">Ligase</keyword>
<keyword id="KW-0597">Phosphoprotein</keyword>
<keyword id="KW-0662">Pyridine nucleotide biosynthesis</keyword>
<feature type="chain" id="PRO_1000129461" description="Nicotinate phosphoribosyltransferase">
    <location>
        <begin position="1"/>
        <end position="391"/>
    </location>
</feature>
<feature type="modified residue" description="Phosphohistidine; by autocatalysis" evidence="1">
    <location>
        <position position="216"/>
    </location>
</feature>
<proteinExistence type="inferred from homology"/>
<sequence length="391" mass="44836">MIITSLLDTDLYKFSMMQVVLHHFPAAQVEYRYKCRTPGVNLRPYLDEIRAEVHALCQLRFTEEELQYLGSLRFIKSDFVDFLGLFHLPERCISIGEGEQPGEIAITVAGPWLHTILFEIPVLAIVNEVYFRNTRRHPDWDEGRQRLQSKMHLVLDDPALADFRVAEYGTRRRFSKLWHEEIVSTMKAQMGAHFAGTSNVLLAMRHNVLPLGTMGHEYLQACQALGPRLRDSQVFALEVWAKEYRGDLGIALSDVYGMDAFLRDFDMYFCKLFDGARHDSGDPFVWGERLLEHYRNNRVDPRAKTLVFSDSLTFPRAIELARQFAGRCKVSFGIGTNLTNDLGHEPLQIVMKMVRCNGQPVAKVSDAPEKTMCDDPAYLAYLRQVFQLPPA</sequence>
<comment type="function">
    <text evidence="1">Catalyzes the synthesis of beta-nicotinate D-ribonucleotide from nicotinate and 5-phospho-D-ribose 1-phosphate at the expense of ATP.</text>
</comment>
<comment type="catalytic activity">
    <reaction evidence="1">
        <text>nicotinate + 5-phospho-alpha-D-ribose 1-diphosphate + ATP + H2O = nicotinate beta-D-ribonucleotide + ADP + phosphate + diphosphate</text>
        <dbReference type="Rhea" id="RHEA:36163"/>
        <dbReference type="ChEBI" id="CHEBI:15377"/>
        <dbReference type="ChEBI" id="CHEBI:30616"/>
        <dbReference type="ChEBI" id="CHEBI:32544"/>
        <dbReference type="ChEBI" id="CHEBI:33019"/>
        <dbReference type="ChEBI" id="CHEBI:43474"/>
        <dbReference type="ChEBI" id="CHEBI:57502"/>
        <dbReference type="ChEBI" id="CHEBI:58017"/>
        <dbReference type="ChEBI" id="CHEBI:456216"/>
        <dbReference type="EC" id="6.3.4.21"/>
    </reaction>
</comment>
<comment type="pathway">
    <text evidence="1">Cofactor biosynthesis; NAD(+) biosynthesis; nicotinate D-ribonucleotide from nicotinate: step 1/1.</text>
</comment>
<comment type="PTM">
    <text evidence="1">Transiently phosphorylated on a His residue during the reaction cycle. Phosphorylation strongly increases the affinity for substrates and increases the rate of nicotinate D-ribonucleotide production. Dephosphorylation regenerates the low-affinity form of the enzyme, leading to product release.</text>
</comment>
<comment type="similarity">
    <text evidence="1">Belongs to the NAPRTase family.</text>
</comment>
<evidence type="ECO:0000255" key="1">
    <source>
        <dbReference type="HAMAP-Rule" id="MF_00570"/>
    </source>
</evidence>
<gene>
    <name evidence="1" type="primary">pncB</name>
    <name type="ordered locus">Bpet1730</name>
</gene>
<protein>
    <recommendedName>
        <fullName evidence="1">Nicotinate phosphoribosyltransferase</fullName>
        <shortName evidence="1">NAPRTase</shortName>
        <ecNumber evidence="1">6.3.4.21</ecNumber>
    </recommendedName>
</protein>
<dbReference type="EC" id="6.3.4.21" evidence="1"/>
<dbReference type="EMBL" id="AM902716">
    <property type="protein sequence ID" value="CAP42069.1"/>
    <property type="molecule type" value="Genomic_DNA"/>
</dbReference>
<dbReference type="SMR" id="A9IIC5"/>
<dbReference type="STRING" id="94624.Bpet1730"/>
<dbReference type="KEGG" id="bpt:Bpet1730"/>
<dbReference type="eggNOG" id="COG1488">
    <property type="taxonomic scope" value="Bacteria"/>
</dbReference>
<dbReference type="UniPathway" id="UPA00253">
    <property type="reaction ID" value="UER00457"/>
</dbReference>
<dbReference type="Proteomes" id="UP000001225">
    <property type="component" value="Chromosome"/>
</dbReference>
<dbReference type="GO" id="GO:0005829">
    <property type="term" value="C:cytosol"/>
    <property type="evidence" value="ECO:0007669"/>
    <property type="project" value="TreeGrafter"/>
</dbReference>
<dbReference type="GO" id="GO:0004516">
    <property type="term" value="F:nicotinate phosphoribosyltransferase activity"/>
    <property type="evidence" value="ECO:0007669"/>
    <property type="project" value="UniProtKB-UniRule"/>
</dbReference>
<dbReference type="GO" id="GO:0034355">
    <property type="term" value="P:NAD biosynthetic process via the salvage pathway"/>
    <property type="evidence" value="ECO:0007669"/>
    <property type="project" value="TreeGrafter"/>
</dbReference>
<dbReference type="CDD" id="cd01401">
    <property type="entry name" value="PncB_like"/>
    <property type="match status" value="1"/>
</dbReference>
<dbReference type="Gene3D" id="3.20.140.10">
    <property type="entry name" value="nicotinate phosphoribosyltransferase"/>
    <property type="match status" value="1"/>
</dbReference>
<dbReference type="HAMAP" id="MF_00570">
    <property type="entry name" value="NAPRTase"/>
    <property type="match status" value="1"/>
</dbReference>
<dbReference type="InterPro" id="IPR041525">
    <property type="entry name" value="N/Namide_PRibTrfase"/>
</dbReference>
<dbReference type="InterPro" id="IPR040727">
    <property type="entry name" value="NAPRTase_N"/>
</dbReference>
<dbReference type="InterPro" id="IPR006406">
    <property type="entry name" value="Nic_PRibTrfase"/>
</dbReference>
<dbReference type="InterPro" id="IPR007229">
    <property type="entry name" value="Nic_PRibTrfase-Fam"/>
</dbReference>
<dbReference type="InterPro" id="IPR036068">
    <property type="entry name" value="Nicotinate_pribotase-like_C"/>
</dbReference>
<dbReference type="NCBIfam" id="TIGR01514">
    <property type="entry name" value="NAPRTase"/>
    <property type="match status" value="1"/>
</dbReference>
<dbReference type="NCBIfam" id="NF003704">
    <property type="entry name" value="PRK05321.1"/>
    <property type="match status" value="1"/>
</dbReference>
<dbReference type="PANTHER" id="PTHR11098">
    <property type="entry name" value="NICOTINATE PHOSPHORIBOSYLTRANSFERASE"/>
    <property type="match status" value="1"/>
</dbReference>
<dbReference type="PANTHER" id="PTHR11098:SF1">
    <property type="entry name" value="NICOTINATE PHOSPHORIBOSYLTRANSFERASE"/>
    <property type="match status" value="1"/>
</dbReference>
<dbReference type="Pfam" id="PF04095">
    <property type="entry name" value="NAPRTase"/>
    <property type="match status" value="1"/>
</dbReference>
<dbReference type="Pfam" id="PF17767">
    <property type="entry name" value="NAPRTase_N"/>
    <property type="match status" value="1"/>
</dbReference>
<dbReference type="PIRSF" id="PIRSF000484">
    <property type="entry name" value="NAPRT"/>
    <property type="match status" value="1"/>
</dbReference>
<dbReference type="SUPFAM" id="SSF51690">
    <property type="entry name" value="Nicotinate/Quinolinate PRTase C-terminal domain-like"/>
    <property type="match status" value="1"/>
</dbReference>
<dbReference type="SUPFAM" id="SSF54675">
    <property type="entry name" value="Nicotinate/Quinolinate PRTase N-terminal domain-like"/>
    <property type="match status" value="1"/>
</dbReference>